<dbReference type="EMBL" id="AF281254">
    <property type="protein sequence ID" value="AAG59793.1"/>
    <property type="molecule type" value="mRNA"/>
</dbReference>
<dbReference type="EMBL" id="AF281255">
    <property type="protein sequence ID" value="AAG59794.1"/>
    <property type="molecule type" value="mRNA"/>
</dbReference>
<dbReference type="EMBL" id="AY040274">
    <property type="protein sequence ID" value="AAK72109.1"/>
    <property type="molecule type" value="mRNA"/>
</dbReference>
<dbReference type="EMBL" id="AK292995">
    <property type="protein sequence ID" value="BAF85684.1"/>
    <property type="molecule type" value="mRNA"/>
</dbReference>
<dbReference type="EMBL" id="CH471094">
    <property type="protein sequence ID" value="EAW96247.1"/>
    <property type="molecule type" value="Genomic_DNA"/>
</dbReference>
<dbReference type="EMBL" id="BC025778">
    <property type="protein sequence ID" value="AAH25778.1"/>
    <property type="molecule type" value="mRNA"/>
</dbReference>
<dbReference type="CCDS" id="CCDS8645.1">
    <molecule id="Q9BZR8-1"/>
</dbReference>
<dbReference type="CCDS" id="CCDS8646.1">
    <molecule id="Q9BZR8-2"/>
</dbReference>
<dbReference type="RefSeq" id="NP_001357197.1">
    <molecule id="Q9BZR8-1"/>
    <property type="nucleotide sequence ID" value="NM_001370268.1"/>
</dbReference>
<dbReference type="RefSeq" id="NP_001357198.1">
    <molecule id="Q9BZR8-1"/>
    <property type="nucleotide sequence ID" value="NM_001370269.1"/>
</dbReference>
<dbReference type="RefSeq" id="NP_110393.1">
    <molecule id="Q9BZR8-2"/>
    <property type="nucleotide sequence ID" value="NM_030766.2"/>
</dbReference>
<dbReference type="RefSeq" id="NP_620048.1">
    <molecule id="Q9BZR8-1"/>
    <property type="nucleotide sequence ID" value="NM_138722.2"/>
</dbReference>
<dbReference type="RefSeq" id="NP_620049.1">
    <molecule id="Q9BZR8-1"/>
    <property type="nucleotide sequence ID" value="NM_138723.2"/>
</dbReference>
<dbReference type="RefSeq" id="XP_006719214.1">
    <property type="nucleotide sequence ID" value="XM_006719151.3"/>
</dbReference>
<dbReference type="RefSeq" id="XP_011519150.1">
    <property type="nucleotide sequence ID" value="XM_011520848.1"/>
</dbReference>
<dbReference type="RefSeq" id="XP_011519151.1">
    <property type="nucleotide sequence ID" value="XM_011520849.1"/>
</dbReference>
<dbReference type="RefSeq" id="XP_016875452.1">
    <property type="nucleotide sequence ID" value="XM_017019963.1"/>
</dbReference>
<dbReference type="BioGRID" id="122658">
    <property type="interactions" value="128"/>
</dbReference>
<dbReference type="FunCoup" id="Q9BZR8">
    <property type="interactions" value="131"/>
</dbReference>
<dbReference type="IntAct" id="Q9BZR8">
    <property type="interactions" value="122"/>
</dbReference>
<dbReference type="MINT" id="Q9BZR8"/>
<dbReference type="STRING" id="9606.ENSP00000309132"/>
<dbReference type="iPTMnet" id="Q9BZR8"/>
<dbReference type="PhosphoSitePlus" id="Q9BZR8"/>
<dbReference type="BioMuta" id="BCL2L14"/>
<dbReference type="DMDM" id="56748611"/>
<dbReference type="jPOST" id="Q9BZR8"/>
<dbReference type="MassIVE" id="Q9BZR8"/>
<dbReference type="PaxDb" id="9606-ENSP00000309132"/>
<dbReference type="PeptideAtlas" id="Q9BZR8"/>
<dbReference type="ProteomicsDB" id="79895">
    <molecule id="Q9BZR8-1"/>
</dbReference>
<dbReference type="ProteomicsDB" id="79896">
    <molecule id="Q9BZR8-2"/>
</dbReference>
<dbReference type="ProteomicsDB" id="79897">
    <molecule id="Q9BZR8-3"/>
</dbReference>
<dbReference type="Antibodypedia" id="11858">
    <property type="antibodies" value="295 antibodies from 35 providers"/>
</dbReference>
<dbReference type="DNASU" id="79370"/>
<dbReference type="Ensembl" id="ENST00000266434.8">
    <molecule id="Q9BZR8-2"/>
    <property type="protein sequence ID" value="ENSP00000266434.4"/>
    <property type="gene ID" value="ENSG00000121380.12"/>
</dbReference>
<dbReference type="Ensembl" id="ENST00000298566.2">
    <molecule id="Q9BZR8-3"/>
    <property type="protein sequence ID" value="ENSP00000298566.1"/>
    <property type="gene ID" value="ENSG00000121380.12"/>
</dbReference>
<dbReference type="Ensembl" id="ENST00000308721.9">
    <molecule id="Q9BZR8-1"/>
    <property type="protein sequence ID" value="ENSP00000309132.4"/>
    <property type="gene ID" value="ENSG00000121380.12"/>
</dbReference>
<dbReference type="Ensembl" id="ENST00000396367.5">
    <molecule id="Q9BZR8-1"/>
    <property type="protein sequence ID" value="ENSP00000379653.1"/>
    <property type="gene ID" value="ENSG00000121380.12"/>
</dbReference>
<dbReference type="Ensembl" id="ENST00000589718.5">
    <molecule id="Q9BZR8-1"/>
    <property type="protein sequence ID" value="ENSP00000467086.1"/>
    <property type="gene ID" value="ENSG00000121380.12"/>
</dbReference>
<dbReference type="Ensembl" id="ENST00000627413.2">
    <molecule id="Q9BZR8-1"/>
    <property type="protein sequence ID" value="ENSP00000486050.1"/>
    <property type="gene ID" value="ENSG00000281449.2"/>
</dbReference>
<dbReference type="Ensembl" id="ENST00000628315.1">
    <molecule id="Q9BZR8-3"/>
    <property type="protein sequence ID" value="ENSP00000485980.1"/>
    <property type="gene ID" value="ENSG00000281449.2"/>
</dbReference>
<dbReference type="Ensembl" id="ENST00000628783.2">
    <molecule id="Q9BZR8-1"/>
    <property type="protein sequence ID" value="ENSP00000487330.1"/>
    <property type="gene ID" value="ENSG00000281449.2"/>
</dbReference>
<dbReference type="Ensembl" id="ENST00000631251.2">
    <molecule id="Q9BZR8-2"/>
    <property type="protein sequence ID" value="ENSP00000486560.1"/>
    <property type="gene ID" value="ENSG00000281449.2"/>
</dbReference>
<dbReference type="Ensembl" id="ENST00000631317.2">
    <molecule id="Q9BZR8-1"/>
    <property type="protein sequence ID" value="ENSP00000486796.1"/>
    <property type="gene ID" value="ENSG00000281449.2"/>
</dbReference>
<dbReference type="GeneID" id="79370"/>
<dbReference type="KEGG" id="hsa:79370"/>
<dbReference type="MANE-Select" id="ENST00000308721.9">
    <property type="protein sequence ID" value="ENSP00000309132.4"/>
    <property type="RefSeq nucleotide sequence ID" value="NM_138723.2"/>
    <property type="RefSeq protein sequence ID" value="NP_620049.1"/>
</dbReference>
<dbReference type="UCSC" id="uc001rac.4">
    <molecule id="Q9BZR8-1"/>
    <property type="organism name" value="human"/>
</dbReference>
<dbReference type="AGR" id="HGNC:16657"/>
<dbReference type="CTD" id="79370"/>
<dbReference type="DisGeNET" id="79370"/>
<dbReference type="GeneCards" id="BCL2L14"/>
<dbReference type="HGNC" id="HGNC:16657">
    <property type="gene designation" value="BCL2L14"/>
</dbReference>
<dbReference type="HPA" id="ENSG00000121380">
    <property type="expression patterns" value="Tissue enhanced (intestine, stomach, testis)"/>
</dbReference>
<dbReference type="MIM" id="606126">
    <property type="type" value="gene"/>
</dbReference>
<dbReference type="neXtProt" id="NX_Q9BZR8"/>
<dbReference type="OpenTargets" id="ENSG00000121380"/>
<dbReference type="PharmGKB" id="PA134870762"/>
<dbReference type="VEuPathDB" id="HostDB:ENSG00000121380"/>
<dbReference type="eggNOG" id="KOG4728">
    <property type="taxonomic scope" value="Eukaryota"/>
</dbReference>
<dbReference type="GeneTree" id="ENSGT00940000154318"/>
<dbReference type="HOGENOM" id="CLU_073095_0_0_1"/>
<dbReference type="InParanoid" id="Q9BZR8"/>
<dbReference type="OrthoDB" id="9948726at2759"/>
<dbReference type="PAN-GO" id="Q9BZR8">
    <property type="GO annotations" value="1 GO annotation based on evolutionary models"/>
</dbReference>
<dbReference type="PhylomeDB" id="Q9BZR8"/>
<dbReference type="PathwayCommons" id="Q9BZR8"/>
<dbReference type="Reactome" id="R-HSA-6803205">
    <property type="pathway name" value="TP53 regulates transcription of several additional cell death genes whose specific roles in p53-dependent apoptosis remain uncertain"/>
</dbReference>
<dbReference type="SignaLink" id="Q9BZR8"/>
<dbReference type="BioGRID-ORCS" id="79370">
    <property type="hits" value="13 hits in 1156 CRISPR screens"/>
</dbReference>
<dbReference type="ChiTaRS" id="BCL2L14">
    <property type="organism name" value="human"/>
</dbReference>
<dbReference type="GeneWiki" id="BCL2L14"/>
<dbReference type="GenomeRNAi" id="79370"/>
<dbReference type="Pharos" id="Q9BZR8">
    <property type="development level" value="Tbio"/>
</dbReference>
<dbReference type="PRO" id="PR:Q9BZR8"/>
<dbReference type="Proteomes" id="UP000005640">
    <property type="component" value="Chromosome 12"/>
</dbReference>
<dbReference type="RNAct" id="Q9BZR8">
    <property type="molecule type" value="protein"/>
</dbReference>
<dbReference type="Bgee" id="ENSG00000121380">
    <property type="expression patterns" value="Expressed in rectum and 96 other cell types or tissues"/>
</dbReference>
<dbReference type="ExpressionAtlas" id="Q9BZR8">
    <property type="expression patterns" value="baseline and differential"/>
</dbReference>
<dbReference type="GO" id="GO:0005829">
    <property type="term" value="C:cytosol"/>
    <property type="evidence" value="ECO:0000314"/>
    <property type="project" value="HPA"/>
</dbReference>
<dbReference type="GO" id="GO:0012505">
    <property type="term" value="C:endomembrane system"/>
    <property type="evidence" value="ECO:0007669"/>
    <property type="project" value="UniProtKB-SubCell"/>
</dbReference>
<dbReference type="GO" id="GO:0043231">
    <property type="term" value="C:intracellular membrane-bounded organelle"/>
    <property type="evidence" value="ECO:0000314"/>
    <property type="project" value="HPA"/>
</dbReference>
<dbReference type="GO" id="GO:0043229">
    <property type="term" value="C:intracellular organelle"/>
    <property type="evidence" value="ECO:0000314"/>
    <property type="project" value="UniProtKB"/>
</dbReference>
<dbReference type="GO" id="GO:0016020">
    <property type="term" value="C:membrane"/>
    <property type="evidence" value="ECO:0007669"/>
    <property type="project" value="UniProtKB-KW"/>
</dbReference>
<dbReference type="GO" id="GO:0019901">
    <property type="term" value="F:protein kinase binding"/>
    <property type="evidence" value="ECO:0000353"/>
    <property type="project" value="UniProtKB"/>
</dbReference>
<dbReference type="GO" id="GO:0006915">
    <property type="term" value="P:apoptotic process"/>
    <property type="evidence" value="ECO:0000314"/>
    <property type="project" value="UniProtKB"/>
</dbReference>
<dbReference type="GO" id="GO:2001238">
    <property type="term" value="P:positive regulation of extrinsic apoptotic signaling pathway"/>
    <property type="evidence" value="ECO:0000314"/>
    <property type="project" value="UniProtKB"/>
</dbReference>
<dbReference type="GO" id="GO:0042981">
    <property type="term" value="P:regulation of apoptotic process"/>
    <property type="evidence" value="ECO:0007669"/>
    <property type="project" value="InterPro"/>
</dbReference>
<dbReference type="FunFam" id="1.10.437.10:FF:000019">
    <property type="entry name" value="Apoptosis facilitator Bcl-2-like protein 14"/>
    <property type="match status" value="1"/>
</dbReference>
<dbReference type="Gene3D" id="1.10.437.10">
    <property type="entry name" value="Blc2-like"/>
    <property type="match status" value="1"/>
</dbReference>
<dbReference type="InterPro" id="IPR036834">
    <property type="entry name" value="Bcl-2-like_sf"/>
</dbReference>
<dbReference type="InterPro" id="IPR002475">
    <property type="entry name" value="Bcl2-like"/>
</dbReference>
<dbReference type="PANTHER" id="PTHR14965:SF1">
    <property type="entry name" value="APOPTOSIS FACILITATOR BCL-2-LIKE PROTEIN 14"/>
    <property type="match status" value="1"/>
</dbReference>
<dbReference type="PANTHER" id="PTHR14965">
    <property type="entry name" value="SI:CH73-248E21.1"/>
    <property type="match status" value="1"/>
</dbReference>
<dbReference type="SUPFAM" id="SSF56854">
    <property type="entry name" value="Bcl-2 inhibitors of programmed cell death"/>
    <property type="match status" value="1"/>
</dbReference>
<dbReference type="PROSITE" id="PS50062">
    <property type="entry name" value="BCL2_FAMILY"/>
    <property type="match status" value="1"/>
</dbReference>
<accession>Q9BZR8</accession>
<accession>A8KAD0</accession>
<accession>Q96QR5</accession>
<accession>Q9BZR7</accession>
<proteinExistence type="evidence at protein level"/>
<name>B2L14_HUMAN</name>
<protein>
    <recommendedName>
        <fullName>Apoptosis facilitator Bcl-2-like protein 14</fullName>
        <shortName>Bcl2-L-14</shortName>
    </recommendedName>
    <alternativeName>
        <fullName>Apoptosis regulator Bcl-G</fullName>
    </alternativeName>
</protein>
<keyword id="KW-0025">Alternative splicing</keyword>
<keyword id="KW-0053">Apoptosis</keyword>
<keyword id="KW-0963">Cytoplasm</keyword>
<keyword id="KW-0472">Membrane</keyword>
<keyword id="KW-0597">Phosphoprotein</keyword>
<keyword id="KW-1267">Proteomics identification</keyword>
<keyword id="KW-1185">Reference proteome</keyword>
<comment type="function">
    <text>Plays a role in apoptosis.</text>
</comment>
<comment type="interaction">
    <interactant intactId="EBI-1385773">
        <id>Q9BZR8</id>
    </interactant>
    <interactant intactId="EBI-742054">
        <id>Q96D03</id>
        <label>DDIT4L</label>
    </interactant>
    <organismsDiffer>false</organismsDiffer>
    <experiments>3</experiments>
</comment>
<comment type="interaction">
    <interactant intactId="EBI-1385773">
        <id>Q9BZR8</id>
    </interactant>
    <interactant intactId="EBI-354956">
        <id>Q08380</id>
        <label>LGALS3BP</label>
    </interactant>
    <organismsDiffer>false</organismsDiffer>
    <experiments>2</experiments>
</comment>
<comment type="interaction">
    <interactant intactId="EBI-1385773">
        <id>Q9BZR8</id>
    </interactant>
    <interactant intactId="EBI-1046702">
        <id>Q14680</id>
        <label>MELK</label>
    </interactant>
    <organismsDiffer>false</organismsDiffer>
    <experiments>4</experiments>
</comment>
<comment type="interaction">
    <interactant intactId="EBI-1385773">
        <id>Q9BZR8</id>
    </interactant>
    <interactant intactId="EBI-79165">
        <id>Q9NRD5</id>
        <label>PICK1</label>
    </interactant>
    <organismsDiffer>false</organismsDiffer>
    <experiments>3</experiments>
</comment>
<comment type="interaction">
    <interactant intactId="EBI-1385773">
        <id>Q9BZR8</id>
    </interactant>
    <interactant intactId="EBI-11139477">
        <id>Q96N21</id>
        <label>TEPSIN</label>
    </interactant>
    <organismsDiffer>false</organismsDiffer>
    <experiments>3</experiments>
</comment>
<comment type="subcellular location">
    <subcellularLocation>
        <location evidence="2">Cytoplasm</location>
    </subcellularLocation>
</comment>
<comment type="subcellular location">
    <molecule>Isoform 1</molecule>
    <subcellularLocation>
        <location>Cytoplasm</location>
        <location>Cytosol</location>
    </subcellularLocation>
    <text>Diffusely distributed throughout the cytosol.</text>
</comment>
<comment type="subcellular location">
    <molecule>Isoform 2</molecule>
    <subcellularLocation>
        <location>Endomembrane system</location>
    </subcellularLocation>
    <text>Predominantly localized to cytosolic organelles.</text>
</comment>
<comment type="alternative products">
    <event type="alternative splicing"/>
    <isoform>
        <id>Q9BZR8-1</id>
        <name>1</name>
        <name>Bcl-Gl</name>
        <name>Long</name>
        <sequence type="displayed"/>
    </isoform>
    <isoform>
        <id>Q9BZR8-2</id>
        <name>2</name>
        <name>Bcl-Gs</name>
        <name>Short</name>
        <sequence type="described" ref="VSP_012239 VSP_012240"/>
    </isoform>
    <isoform>
        <id>Q9BZR8-3</id>
        <name>3</name>
        <name>Median</name>
        <sequence type="described" ref="VSP_012241 VSP_012242"/>
    </isoform>
</comment>
<comment type="tissue specificity">
    <text evidence="2">Isoform 1 is widely expressed. Isoform 2 is testis-specific.</text>
</comment>
<comment type="PTM">
    <text evidence="3">Phosphorylated by MELK, leading to inhibit its pro-apoptotic function.</text>
</comment>
<comment type="miscellaneous">
    <molecule>Isoform 3</molecule>
    <text evidence="6">May be produced at very low levels due to a premature stop codon in the mRNA, leading to nonsense-mediated mRNA decay.</text>
</comment>
<comment type="similarity">
    <text evidence="6">Belongs to the Bcl-2 family.</text>
</comment>
<feature type="chain" id="PRO_0000143075" description="Apoptosis facilitator Bcl-2-like protein 14">
    <location>
        <begin position="1"/>
        <end position="327"/>
    </location>
</feature>
<feature type="short sequence motif" description="BH3">
    <location>
        <begin position="212"/>
        <end position="226"/>
    </location>
</feature>
<feature type="short sequence motif" description="BH2">
    <location>
        <begin position="308"/>
        <end position="315"/>
    </location>
</feature>
<feature type="modified residue" description="Phosphoserine" evidence="1">
    <location>
        <position position="44"/>
    </location>
</feature>
<feature type="splice variant" id="VSP_012241" description="In isoform 3." evidence="5">
    <original>LKKDKALMGHFQDGLSYSVFKTITDQVLMGVDPRGESEVKAQGFKAALVI</original>
    <variation>EKEWEESAKTKIKMALLWRSSGGGPRVLSIPEAFMKNSFTLTPPGFSEHN</variation>
    <location>
        <begin position="227"/>
        <end position="276"/>
    </location>
</feature>
<feature type="splice variant" id="VSP_012239" description="In isoform 2." evidence="4">
    <original>LKKDKALMGHFQDGLSYSVFKTITDQ</original>
    <variation>DTAFIPIPLVDTSIQGFPQDGLMACI</variation>
    <location>
        <begin position="227"/>
        <end position="252"/>
    </location>
</feature>
<feature type="splice variant" id="VSP_012240" description="In isoform 2." evidence="4">
    <location>
        <begin position="253"/>
        <end position="327"/>
    </location>
</feature>
<feature type="splice variant" id="VSP_012242" description="In isoform 3." evidence="5">
    <location>
        <begin position="277"/>
        <end position="327"/>
    </location>
</feature>
<reference key="1">
    <citation type="journal article" date="2001" name="J. Biol. Chem.">
        <title>Bcl-G, a novel pro-apoptotic member of the Bcl-2 family.</title>
        <authorList>
            <person name="Guo B."/>
            <person name="Godzik A."/>
            <person name="Reed J.C."/>
        </authorList>
    </citation>
    <scope>NUCLEOTIDE SEQUENCE [MRNA] (ISOFORMS 1 AND 2)</scope>
    <scope>TISSUE SPECIFICITY</scope>
    <scope>SUBCELLULAR LOCATION</scope>
</reference>
<reference key="2">
    <citation type="journal article" date="2004" name="Leukemia">
        <title>Mutational and expression analysis of the chromosome 12p candidate tumor suppressor genes in pre-B acute lymphoblastic leukemia.</title>
        <authorList>
            <person name="Montpetit A."/>
            <person name="Larose J."/>
            <person name="Boily G."/>
            <person name="Langlois S."/>
            <person name="Trudel N."/>
            <person name="Sinnett D."/>
        </authorList>
    </citation>
    <scope>NUCLEOTIDE SEQUENCE [MRNA] (ISOFORM 3)</scope>
</reference>
<reference key="3">
    <citation type="journal article" date="2004" name="Nat. Genet.">
        <title>Complete sequencing and characterization of 21,243 full-length human cDNAs.</title>
        <authorList>
            <person name="Ota T."/>
            <person name="Suzuki Y."/>
            <person name="Nishikawa T."/>
            <person name="Otsuki T."/>
            <person name="Sugiyama T."/>
            <person name="Irie R."/>
            <person name="Wakamatsu A."/>
            <person name="Hayashi K."/>
            <person name="Sato H."/>
            <person name="Nagai K."/>
            <person name="Kimura K."/>
            <person name="Makita H."/>
            <person name="Sekine M."/>
            <person name="Obayashi M."/>
            <person name="Nishi T."/>
            <person name="Shibahara T."/>
            <person name="Tanaka T."/>
            <person name="Ishii S."/>
            <person name="Yamamoto J."/>
            <person name="Saito K."/>
            <person name="Kawai Y."/>
            <person name="Isono Y."/>
            <person name="Nakamura Y."/>
            <person name="Nagahari K."/>
            <person name="Murakami K."/>
            <person name="Yasuda T."/>
            <person name="Iwayanagi T."/>
            <person name="Wagatsuma M."/>
            <person name="Shiratori A."/>
            <person name="Sudo H."/>
            <person name="Hosoiri T."/>
            <person name="Kaku Y."/>
            <person name="Kodaira H."/>
            <person name="Kondo H."/>
            <person name="Sugawara M."/>
            <person name="Takahashi M."/>
            <person name="Kanda K."/>
            <person name="Yokoi T."/>
            <person name="Furuya T."/>
            <person name="Kikkawa E."/>
            <person name="Omura Y."/>
            <person name="Abe K."/>
            <person name="Kamihara K."/>
            <person name="Katsuta N."/>
            <person name="Sato K."/>
            <person name="Tanikawa M."/>
            <person name="Yamazaki M."/>
            <person name="Ninomiya K."/>
            <person name="Ishibashi T."/>
            <person name="Yamashita H."/>
            <person name="Murakawa K."/>
            <person name="Fujimori K."/>
            <person name="Tanai H."/>
            <person name="Kimata M."/>
            <person name="Watanabe M."/>
            <person name="Hiraoka S."/>
            <person name="Chiba Y."/>
            <person name="Ishida S."/>
            <person name="Ono Y."/>
            <person name="Takiguchi S."/>
            <person name="Watanabe S."/>
            <person name="Yosida M."/>
            <person name="Hotuta T."/>
            <person name="Kusano J."/>
            <person name="Kanehori K."/>
            <person name="Takahashi-Fujii A."/>
            <person name="Hara H."/>
            <person name="Tanase T.-O."/>
            <person name="Nomura Y."/>
            <person name="Togiya S."/>
            <person name="Komai F."/>
            <person name="Hara R."/>
            <person name="Takeuchi K."/>
            <person name="Arita M."/>
            <person name="Imose N."/>
            <person name="Musashino K."/>
            <person name="Yuuki H."/>
            <person name="Oshima A."/>
            <person name="Sasaki N."/>
            <person name="Aotsuka S."/>
            <person name="Yoshikawa Y."/>
            <person name="Matsunawa H."/>
            <person name="Ichihara T."/>
            <person name="Shiohata N."/>
            <person name="Sano S."/>
            <person name="Moriya S."/>
            <person name="Momiyama H."/>
            <person name="Satoh N."/>
            <person name="Takami S."/>
            <person name="Terashima Y."/>
            <person name="Suzuki O."/>
            <person name="Nakagawa S."/>
            <person name="Senoh A."/>
            <person name="Mizoguchi H."/>
            <person name="Goto Y."/>
            <person name="Shimizu F."/>
            <person name="Wakebe H."/>
            <person name="Hishigaki H."/>
            <person name="Watanabe T."/>
            <person name="Sugiyama A."/>
            <person name="Takemoto M."/>
            <person name="Kawakami B."/>
            <person name="Yamazaki M."/>
            <person name="Watanabe K."/>
            <person name="Kumagai A."/>
            <person name="Itakura S."/>
            <person name="Fukuzumi Y."/>
            <person name="Fujimori Y."/>
            <person name="Komiyama M."/>
            <person name="Tashiro H."/>
            <person name="Tanigami A."/>
            <person name="Fujiwara T."/>
            <person name="Ono T."/>
            <person name="Yamada K."/>
            <person name="Fujii Y."/>
            <person name="Ozaki K."/>
            <person name="Hirao M."/>
            <person name="Ohmori Y."/>
            <person name="Kawabata A."/>
            <person name="Hikiji T."/>
            <person name="Kobatake N."/>
            <person name="Inagaki H."/>
            <person name="Ikema Y."/>
            <person name="Okamoto S."/>
            <person name="Okitani R."/>
            <person name="Kawakami T."/>
            <person name="Noguchi S."/>
            <person name="Itoh T."/>
            <person name="Shigeta K."/>
            <person name="Senba T."/>
            <person name="Matsumura K."/>
            <person name="Nakajima Y."/>
            <person name="Mizuno T."/>
            <person name="Morinaga M."/>
            <person name="Sasaki M."/>
            <person name="Togashi T."/>
            <person name="Oyama M."/>
            <person name="Hata H."/>
            <person name="Watanabe M."/>
            <person name="Komatsu T."/>
            <person name="Mizushima-Sugano J."/>
            <person name="Satoh T."/>
            <person name="Shirai Y."/>
            <person name="Takahashi Y."/>
            <person name="Nakagawa K."/>
            <person name="Okumura K."/>
            <person name="Nagase T."/>
            <person name="Nomura N."/>
            <person name="Kikuchi H."/>
            <person name="Masuho Y."/>
            <person name="Yamashita R."/>
            <person name="Nakai K."/>
            <person name="Yada T."/>
            <person name="Nakamura Y."/>
            <person name="Ohara O."/>
            <person name="Isogai T."/>
            <person name="Sugano S."/>
        </authorList>
    </citation>
    <scope>NUCLEOTIDE SEQUENCE [LARGE SCALE MRNA] (ISOFORM 1)</scope>
    <source>
        <tissue>Trachea</tissue>
    </source>
</reference>
<reference key="4">
    <citation type="submission" date="2005-07" db="EMBL/GenBank/DDBJ databases">
        <authorList>
            <person name="Mural R.J."/>
            <person name="Istrail S."/>
            <person name="Sutton G.G."/>
            <person name="Florea L."/>
            <person name="Halpern A.L."/>
            <person name="Mobarry C.M."/>
            <person name="Lippert R."/>
            <person name="Walenz B."/>
            <person name="Shatkay H."/>
            <person name="Dew I."/>
            <person name="Miller J.R."/>
            <person name="Flanigan M.J."/>
            <person name="Edwards N.J."/>
            <person name="Bolanos R."/>
            <person name="Fasulo D."/>
            <person name="Halldorsson B.V."/>
            <person name="Hannenhalli S."/>
            <person name="Turner R."/>
            <person name="Yooseph S."/>
            <person name="Lu F."/>
            <person name="Nusskern D.R."/>
            <person name="Shue B.C."/>
            <person name="Zheng X.H."/>
            <person name="Zhong F."/>
            <person name="Delcher A.L."/>
            <person name="Huson D.H."/>
            <person name="Kravitz S.A."/>
            <person name="Mouchard L."/>
            <person name="Reinert K."/>
            <person name="Remington K.A."/>
            <person name="Clark A.G."/>
            <person name="Waterman M.S."/>
            <person name="Eichler E.E."/>
            <person name="Adams M.D."/>
            <person name="Hunkapiller M.W."/>
            <person name="Myers E.W."/>
            <person name="Venter J.C."/>
        </authorList>
    </citation>
    <scope>NUCLEOTIDE SEQUENCE [LARGE SCALE GENOMIC DNA]</scope>
</reference>
<reference key="5">
    <citation type="journal article" date="2004" name="Genome Res.">
        <title>The status, quality, and expansion of the NIH full-length cDNA project: the Mammalian Gene Collection (MGC).</title>
        <authorList>
            <consortium name="The MGC Project Team"/>
        </authorList>
    </citation>
    <scope>NUCLEOTIDE SEQUENCE [LARGE SCALE MRNA] (ISOFORM 1)</scope>
    <source>
        <tissue>Pancreas</tissue>
    </source>
</reference>
<reference key="6">
    <citation type="journal article" date="2007" name="Breast Cancer Res.">
        <title>Involvement of maternal embryonic leucine zipper kinase (MELK) in mammary carcinogenesis through interaction with Bcl-G, a pro-apoptotic member of the Bcl-2 family.</title>
        <authorList>
            <person name="Lin M.L."/>
            <person name="Park J.H."/>
            <person name="Nishidate T."/>
            <person name="Nakamura Y."/>
            <person name="Katagiri T."/>
        </authorList>
    </citation>
    <scope>PHOSPHORYLATION BY MELK</scope>
</reference>
<evidence type="ECO:0000250" key="1">
    <source>
        <dbReference type="UniProtKB" id="Q6AYK4"/>
    </source>
</evidence>
<evidence type="ECO:0000269" key="2">
    <source>
    </source>
</evidence>
<evidence type="ECO:0000269" key="3">
    <source>
    </source>
</evidence>
<evidence type="ECO:0000303" key="4">
    <source>
    </source>
</evidence>
<evidence type="ECO:0000303" key="5">
    <source>
    </source>
</evidence>
<evidence type="ECO:0000305" key="6"/>
<organism>
    <name type="scientific">Homo sapiens</name>
    <name type="common">Human</name>
    <dbReference type="NCBI Taxonomy" id="9606"/>
    <lineage>
        <taxon>Eukaryota</taxon>
        <taxon>Metazoa</taxon>
        <taxon>Chordata</taxon>
        <taxon>Craniata</taxon>
        <taxon>Vertebrata</taxon>
        <taxon>Euteleostomi</taxon>
        <taxon>Mammalia</taxon>
        <taxon>Eutheria</taxon>
        <taxon>Euarchontoglires</taxon>
        <taxon>Primates</taxon>
        <taxon>Haplorrhini</taxon>
        <taxon>Catarrhini</taxon>
        <taxon>Hominidae</taxon>
        <taxon>Homo</taxon>
    </lineage>
</organism>
<gene>
    <name type="primary">BCL2L14</name>
    <name type="synonym">BCLG</name>
</gene>
<sequence length="327" mass="36598">MCSTSGCDLEEIPLDDDDLNTIEFKILAYYTRHHVFKSTPALFSPKLLRTRSLSQRGLGNCSANESWTEVSWPCRNSQSSEKAINLGKKKSSWKAFFGVVEKEDSQSTPAKVSAQGQRTLEYQDSHSQQWSRCLSNVEQCLEHEAVDPKVISIANRVAEIVYSWPPPQATQAGGFKSKEIFVTEGLSFQLQGHVPVASSSKKDEEEQILAKIVELLKYSGDQLERKLKKDKALMGHFQDGLSYSVFKTITDQVLMGVDPRGESEVKAQGFKAALVIDVTAKLTAIDNHPMNRVLGFGTKYLKENFSPWIQQHGGWEKILGISHEEVD</sequence>